<protein>
    <recommendedName>
        <fullName evidence="1">Transcription antitermination protein NusB</fullName>
    </recommendedName>
    <alternativeName>
        <fullName evidence="1">Antitermination factor NusB</fullName>
    </alternativeName>
</protein>
<sequence length="151" mass="18187">MKRRKAREYVLQFLYACEMNENTQKICNYNFLQEEIEKFWERNYEEQNSDIKSFANQLIEGTIEHIDIIDKIIQKYADKWNIERMITIDKNILRFSIYEILYRQDIPYQVTINEAVEIAKKYSTKESAAFINGILDRIAKEEICHNKSAEK</sequence>
<reference key="1">
    <citation type="submission" date="2008-08" db="EMBL/GenBank/DDBJ databases">
        <title>The complete genome sequence of Thermodesulfovibrio yellowstonii strain ATCC 51303 / DSM 11347 / YP87.</title>
        <authorList>
            <person name="Dodson R.J."/>
            <person name="Durkin A.S."/>
            <person name="Wu M."/>
            <person name="Eisen J."/>
            <person name="Sutton G."/>
        </authorList>
    </citation>
    <scope>NUCLEOTIDE SEQUENCE [LARGE SCALE GENOMIC DNA]</scope>
    <source>
        <strain>ATCC 51303 / DSM 11347 / YP87</strain>
    </source>
</reference>
<comment type="function">
    <text evidence="1">Involved in transcription antitermination. Required for transcription of ribosomal RNA (rRNA) genes. Binds specifically to the boxA antiterminator sequence of the ribosomal RNA (rrn) operons.</text>
</comment>
<comment type="similarity">
    <text evidence="1">Belongs to the NusB family.</text>
</comment>
<feature type="chain" id="PRO_1000117058" description="Transcription antitermination protein NusB">
    <location>
        <begin position="1"/>
        <end position="151"/>
    </location>
</feature>
<dbReference type="EMBL" id="CP001147">
    <property type="protein sequence ID" value="ACI21840.1"/>
    <property type="molecule type" value="Genomic_DNA"/>
</dbReference>
<dbReference type="RefSeq" id="WP_012546543.1">
    <property type="nucleotide sequence ID" value="NC_011296.1"/>
</dbReference>
<dbReference type="RefSeq" id="YP_002249638.1">
    <property type="nucleotide sequence ID" value="NC_011296.1"/>
</dbReference>
<dbReference type="SMR" id="B5YHQ2"/>
<dbReference type="FunCoup" id="B5YHQ2">
    <property type="interactions" value="321"/>
</dbReference>
<dbReference type="STRING" id="289376.THEYE_A1848"/>
<dbReference type="EnsemblBacteria" id="ACI21840">
    <property type="protein sequence ID" value="ACI21840"/>
    <property type="gene ID" value="THEYE_A1848"/>
</dbReference>
<dbReference type="KEGG" id="tye:THEYE_A1848"/>
<dbReference type="PATRIC" id="fig|289376.4.peg.1801"/>
<dbReference type="eggNOG" id="COG0781">
    <property type="taxonomic scope" value="Bacteria"/>
</dbReference>
<dbReference type="HOGENOM" id="CLU_087843_3_3_0"/>
<dbReference type="InParanoid" id="B5YHQ2"/>
<dbReference type="OrthoDB" id="9811381at2"/>
<dbReference type="Proteomes" id="UP000000718">
    <property type="component" value="Chromosome"/>
</dbReference>
<dbReference type="GO" id="GO:0005829">
    <property type="term" value="C:cytosol"/>
    <property type="evidence" value="ECO:0000318"/>
    <property type="project" value="GO_Central"/>
</dbReference>
<dbReference type="GO" id="GO:0003723">
    <property type="term" value="F:RNA binding"/>
    <property type="evidence" value="ECO:0007669"/>
    <property type="project" value="UniProtKB-UniRule"/>
</dbReference>
<dbReference type="GO" id="GO:0006353">
    <property type="term" value="P:DNA-templated transcription termination"/>
    <property type="evidence" value="ECO:0007669"/>
    <property type="project" value="UniProtKB-UniRule"/>
</dbReference>
<dbReference type="GO" id="GO:0031564">
    <property type="term" value="P:transcription antitermination"/>
    <property type="evidence" value="ECO:0007669"/>
    <property type="project" value="UniProtKB-KW"/>
</dbReference>
<dbReference type="Gene3D" id="1.10.940.10">
    <property type="entry name" value="NusB-like"/>
    <property type="match status" value="1"/>
</dbReference>
<dbReference type="HAMAP" id="MF_00073">
    <property type="entry name" value="NusB"/>
    <property type="match status" value="1"/>
</dbReference>
<dbReference type="InterPro" id="IPR035926">
    <property type="entry name" value="NusB-like_sf"/>
</dbReference>
<dbReference type="InterPro" id="IPR011605">
    <property type="entry name" value="NusB_fam"/>
</dbReference>
<dbReference type="InterPro" id="IPR006027">
    <property type="entry name" value="NusB_RsmB_TIM44"/>
</dbReference>
<dbReference type="NCBIfam" id="TIGR01951">
    <property type="entry name" value="nusB"/>
    <property type="match status" value="1"/>
</dbReference>
<dbReference type="PANTHER" id="PTHR11078:SF3">
    <property type="entry name" value="ANTITERMINATION NUSB DOMAIN-CONTAINING PROTEIN"/>
    <property type="match status" value="1"/>
</dbReference>
<dbReference type="PANTHER" id="PTHR11078">
    <property type="entry name" value="N UTILIZATION SUBSTANCE PROTEIN B-RELATED"/>
    <property type="match status" value="1"/>
</dbReference>
<dbReference type="Pfam" id="PF01029">
    <property type="entry name" value="NusB"/>
    <property type="match status" value="1"/>
</dbReference>
<dbReference type="SUPFAM" id="SSF48013">
    <property type="entry name" value="NusB-like"/>
    <property type="match status" value="1"/>
</dbReference>
<proteinExistence type="inferred from homology"/>
<evidence type="ECO:0000255" key="1">
    <source>
        <dbReference type="HAMAP-Rule" id="MF_00073"/>
    </source>
</evidence>
<gene>
    <name evidence="1" type="primary">nusB</name>
    <name type="ordered locus">THEYE_A1848</name>
</gene>
<organism>
    <name type="scientific">Thermodesulfovibrio yellowstonii (strain ATCC 51303 / DSM 11347 / YP87)</name>
    <dbReference type="NCBI Taxonomy" id="289376"/>
    <lineage>
        <taxon>Bacteria</taxon>
        <taxon>Pseudomonadati</taxon>
        <taxon>Nitrospirota</taxon>
        <taxon>Thermodesulfovibrionia</taxon>
        <taxon>Thermodesulfovibrionales</taxon>
        <taxon>Thermodesulfovibrionaceae</taxon>
        <taxon>Thermodesulfovibrio</taxon>
    </lineage>
</organism>
<keyword id="KW-1185">Reference proteome</keyword>
<keyword id="KW-0694">RNA-binding</keyword>
<keyword id="KW-0804">Transcription</keyword>
<keyword id="KW-0889">Transcription antitermination</keyword>
<keyword id="KW-0805">Transcription regulation</keyword>
<name>NUSB_THEYD</name>
<accession>B5YHQ2</accession>